<comment type="function">
    <text evidence="1">Catalyzes the dehydration of methylthioribulose-1-phosphate (MTRu-1-P) into 2,3-diketo-5-methylthiopentyl-1-phosphate (DK-MTP-1-P).</text>
</comment>
<comment type="catalytic activity">
    <reaction evidence="1">
        <text>5-(methylsulfanyl)-D-ribulose 1-phosphate = 5-methylsulfanyl-2,3-dioxopentyl phosphate + H2O</text>
        <dbReference type="Rhea" id="RHEA:15549"/>
        <dbReference type="ChEBI" id="CHEBI:15377"/>
        <dbReference type="ChEBI" id="CHEBI:58548"/>
        <dbReference type="ChEBI" id="CHEBI:58828"/>
        <dbReference type="EC" id="4.2.1.109"/>
    </reaction>
</comment>
<comment type="cofactor">
    <cofactor evidence="1">
        <name>Zn(2+)</name>
        <dbReference type="ChEBI" id="CHEBI:29105"/>
    </cofactor>
    <text evidence="1">Binds 1 zinc ion per subunit.</text>
</comment>
<comment type="pathway">
    <text evidence="1">Amino-acid biosynthesis; L-methionine biosynthesis via salvage pathway; L-methionine from S-methyl-5-thio-alpha-D-ribose 1-phosphate: step 2/6.</text>
</comment>
<comment type="subcellular location">
    <subcellularLocation>
        <location evidence="1">Cytoplasm</location>
    </subcellularLocation>
</comment>
<comment type="similarity">
    <text evidence="1">Belongs to the aldolase class II family. MtnB subfamily.</text>
</comment>
<sequence length="255" mass="28374">MSSDISNNDHLVLSDNPDHPANLIPSLCAKFWTLGWVTGTGGGCSIRENDLVYIAPSGVQKELMKAADIYVLSLAAQTASLRDRVYLRSPPCYKPSQCTPLFLAAFTKRRAGCCIHTHSQWAVLVTLILEAGGGPGGAEDAREFRINNIEQIKGFGKGFEKSGNLGYHDTLRIPVIENTAHEEDLTEFLEEAMDKYPDTYAVLVRRHGVYVWGDNVHKAKTQCESLDYLFQLAVEMKKMSLPWITDITPVKTRRS</sequence>
<feature type="chain" id="PRO_0000393829" description="Methylthioribulose-1-phosphate dehydratase">
    <location>
        <begin position="1"/>
        <end position="255"/>
    </location>
</feature>
<feature type="active site" description="Proton donor/acceptor" evidence="1">
    <location>
        <position position="150"/>
    </location>
</feature>
<feature type="binding site" evidence="1">
    <location>
        <position position="98"/>
    </location>
    <ligand>
        <name>substrate</name>
    </ligand>
</feature>
<feature type="binding site" evidence="1">
    <location>
        <position position="116"/>
    </location>
    <ligand>
        <name>Zn(2+)</name>
        <dbReference type="ChEBI" id="CHEBI:29105"/>
    </ligand>
</feature>
<feature type="binding site" evidence="1">
    <location>
        <position position="118"/>
    </location>
    <ligand>
        <name>Zn(2+)</name>
        <dbReference type="ChEBI" id="CHEBI:29105"/>
    </ligand>
</feature>
<feature type="binding site" evidence="1">
    <location>
        <position position="207"/>
    </location>
    <ligand>
        <name>Zn(2+)</name>
        <dbReference type="ChEBI" id="CHEBI:29105"/>
    </ligand>
</feature>
<accession>A4RK52</accession>
<accession>G4MTZ1</accession>
<evidence type="ECO:0000255" key="1">
    <source>
        <dbReference type="HAMAP-Rule" id="MF_03116"/>
    </source>
</evidence>
<name>MTNB_PYRO7</name>
<protein>
    <recommendedName>
        <fullName evidence="1">Methylthioribulose-1-phosphate dehydratase</fullName>
        <shortName evidence="1">MTRu-1-P dehydratase</shortName>
        <ecNumber evidence="1">4.2.1.109</ecNumber>
    </recommendedName>
</protein>
<keyword id="KW-0028">Amino-acid biosynthesis</keyword>
<keyword id="KW-0963">Cytoplasm</keyword>
<keyword id="KW-0456">Lyase</keyword>
<keyword id="KW-0479">Metal-binding</keyword>
<keyword id="KW-0486">Methionine biosynthesis</keyword>
<keyword id="KW-1185">Reference proteome</keyword>
<keyword id="KW-0862">Zinc</keyword>
<proteinExistence type="inferred from homology"/>
<gene>
    <name evidence="1" type="primary">MDE1</name>
    <name type="ORF">MGG_01608</name>
</gene>
<reference key="1">
    <citation type="journal article" date="2005" name="Nature">
        <title>The genome sequence of the rice blast fungus Magnaporthe grisea.</title>
        <authorList>
            <person name="Dean R.A."/>
            <person name="Talbot N.J."/>
            <person name="Ebbole D.J."/>
            <person name="Farman M.L."/>
            <person name="Mitchell T.K."/>
            <person name="Orbach M.J."/>
            <person name="Thon M.R."/>
            <person name="Kulkarni R."/>
            <person name="Xu J.-R."/>
            <person name="Pan H."/>
            <person name="Read N.D."/>
            <person name="Lee Y.-H."/>
            <person name="Carbone I."/>
            <person name="Brown D."/>
            <person name="Oh Y.Y."/>
            <person name="Donofrio N."/>
            <person name="Jeong J.S."/>
            <person name="Soanes D.M."/>
            <person name="Djonovic S."/>
            <person name="Kolomiets E."/>
            <person name="Rehmeyer C."/>
            <person name="Li W."/>
            <person name="Harding M."/>
            <person name="Kim S."/>
            <person name="Lebrun M.-H."/>
            <person name="Bohnert H."/>
            <person name="Coughlan S."/>
            <person name="Butler J."/>
            <person name="Calvo S.E."/>
            <person name="Ma L.-J."/>
            <person name="Nicol R."/>
            <person name="Purcell S."/>
            <person name="Nusbaum C."/>
            <person name="Galagan J.E."/>
            <person name="Birren B.W."/>
        </authorList>
    </citation>
    <scope>NUCLEOTIDE SEQUENCE [LARGE SCALE GENOMIC DNA]</scope>
    <source>
        <strain>70-15 / ATCC MYA-4617 / FGSC 8958</strain>
    </source>
</reference>
<organism>
    <name type="scientific">Pyricularia oryzae (strain 70-15 / ATCC MYA-4617 / FGSC 8958)</name>
    <name type="common">Rice blast fungus</name>
    <name type="synonym">Magnaporthe oryzae</name>
    <dbReference type="NCBI Taxonomy" id="242507"/>
    <lineage>
        <taxon>Eukaryota</taxon>
        <taxon>Fungi</taxon>
        <taxon>Dikarya</taxon>
        <taxon>Ascomycota</taxon>
        <taxon>Pezizomycotina</taxon>
        <taxon>Sordariomycetes</taxon>
        <taxon>Sordariomycetidae</taxon>
        <taxon>Magnaporthales</taxon>
        <taxon>Pyriculariaceae</taxon>
        <taxon>Pyricularia</taxon>
    </lineage>
</organism>
<dbReference type="EC" id="4.2.1.109" evidence="1"/>
<dbReference type="EMBL" id="CM001232">
    <property type="protein sequence ID" value="EHA54785.1"/>
    <property type="molecule type" value="Genomic_DNA"/>
</dbReference>
<dbReference type="RefSeq" id="XP_003714592.1">
    <property type="nucleotide sequence ID" value="XM_003714544.1"/>
</dbReference>
<dbReference type="SMR" id="A4RK52"/>
<dbReference type="FunCoup" id="A4RK52">
    <property type="interactions" value="249"/>
</dbReference>
<dbReference type="STRING" id="242507.A4RK52"/>
<dbReference type="EnsemblFungi" id="MGG_01608T0">
    <property type="protein sequence ID" value="MGG_01608T0"/>
    <property type="gene ID" value="MGG_01608"/>
</dbReference>
<dbReference type="GeneID" id="2679309"/>
<dbReference type="KEGG" id="mgr:MGG_01608"/>
<dbReference type="VEuPathDB" id="FungiDB:MGG_01608"/>
<dbReference type="eggNOG" id="KOG2631">
    <property type="taxonomic scope" value="Eukaryota"/>
</dbReference>
<dbReference type="HOGENOM" id="CLU_006033_4_0_1"/>
<dbReference type="InParanoid" id="A4RK52"/>
<dbReference type="OMA" id="WFPGTSG"/>
<dbReference type="OrthoDB" id="191080at2759"/>
<dbReference type="UniPathway" id="UPA00904">
    <property type="reaction ID" value="UER00875"/>
</dbReference>
<dbReference type="Proteomes" id="UP000009058">
    <property type="component" value="Chromosome 2"/>
</dbReference>
<dbReference type="GO" id="GO:0005737">
    <property type="term" value="C:cytoplasm"/>
    <property type="evidence" value="ECO:0007669"/>
    <property type="project" value="UniProtKB-SubCell"/>
</dbReference>
<dbReference type="GO" id="GO:0046570">
    <property type="term" value="F:methylthioribulose 1-phosphate dehydratase activity"/>
    <property type="evidence" value="ECO:0007669"/>
    <property type="project" value="UniProtKB-UniRule"/>
</dbReference>
<dbReference type="GO" id="GO:0008270">
    <property type="term" value="F:zinc ion binding"/>
    <property type="evidence" value="ECO:0007669"/>
    <property type="project" value="UniProtKB-UniRule"/>
</dbReference>
<dbReference type="GO" id="GO:0019509">
    <property type="term" value="P:L-methionine salvage from methylthioadenosine"/>
    <property type="evidence" value="ECO:0007669"/>
    <property type="project" value="UniProtKB-UniRule"/>
</dbReference>
<dbReference type="FunFam" id="3.40.225.10:FF:000003">
    <property type="entry name" value="Methylthioribulose-1-phosphate dehydratase"/>
    <property type="match status" value="1"/>
</dbReference>
<dbReference type="Gene3D" id="3.40.225.10">
    <property type="entry name" value="Class II aldolase/adducin N-terminal domain"/>
    <property type="match status" value="1"/>
</dbReference>
<dbReference type="HAMAP" id="MF_03116">
    <property type="entry name" value="Salvage_MtnB_euk"/>
    <property type="match status" value="1"/>
</dbReference>
<dbReference type="InterPro" id="IPR001303">
    <property type="entry name" value="Aldolase_II/adducin_N"/>
</dbReference>
<dbReference type="InterPro" id="IPR036409">
    <property type="entry name" value="Aldolase_II/adducin_N_sf"/>
</dbReference>
<dbReference type="InterPro" id="IPR017714">
    <property type="entry name" value="MethylthioRu-1-P_deHdtase_MtnB"/>
</dbReference>
<dbReference type="InterPro" id="IPR027514">
    <property type="entry name" value="Salvage_MtnB_euk"/>
</dbReference>
<dbReference type="NCBIfam" id="TIGR03328">
    <property type="entry name" value="salvage_mtnB"/>
    <property type="match status" value="1"/>
</dbReference>
<dbReference type="PANTHER" id="PTHR10640">
    <property type="entry name" value="METHYLTHIORIBULOSE-1-PHOSPHATE DEHYDRATASE"/>
    <property type="match status" value="1"/>
</dbReference>
<dbReference type="PANTHER" id="PTHR10640:SF7">
    <property type="entry name" value="METHYLTHIORIBULOSE-1-PHOSPHATE DEHYDRATASE"/>
    <property type="match status" value="1"/>
</dbReference>
<dbReference type="Pfam" id="PF00596">
    <property type="entry name" value="Aldolase_II"/>
    <property type="match status" value="1"/>
</dbReference>
<dbReference type="SMART" id="SM01007">
    <property type="entry name" value="Aldolase_II"/>
    <property type="match status" value="1"/>
</dbReference>
<dbReference type="SUPFAM" id="SSF53639">
    <property type="entry name" value="AraD/HMP-PK domain-like"/>
    <property type="match status" value="1"/>
</dbReference>